<sequence>MAVQQNKKSRSARDMRRSHDALEASTLSVEKTTGEIHLRHHVSPEGVYRGRKVIDKGADE</sequence>
<feature type="chain" id="PRO_0000225753" description="Large ribosomal subunit protein bL32">
    <location>
        <begin position="1"/>
        <end position="60"/>
    </location>
</feature>
<feature type="region of interest" description="Disordered" evidence="2">
    <location>
        <begin position="1"/>
        <end position="28"/>
    </location>
</feature>
<feature type="compositionally biased region" description="Basic and acidic residues" evidence="2">
    <location>
        <begin position="11"/>
        <end position="22"/>
    </location>
</feature>
<reference key="1">
    <citation type="journal article" date="2005" name="J. Bacteriol.">
        <title>Whole-genome sequence analysis of Pseudomonas syringae pv. phaseolicola 1448A reveals divergence among pathovars in genes involved in virulence and transposition.</title>
        <authorList>
            <person name="Joardar V."/>
            <person name="Lindeberg M."/>
            <person name="Jackson R.W."/>
            <person name="Selengut J."/>
            <person name="Dodson R."/>
            <person name="Brinkac L.M."/>
            <person name="Daugherty S.C."/>
            <person name="DeBoy R.T."/>
            <person name="Durkin A.S."/>
            <person name="Gwinn Giglio M."/>
            <person name="Madupu R."/>
            <person name="Nelson W.C."/>
            <person name="Rosovitz M.J."/>
            <person name="Sullivan S.A."/>
            <person name="Crabtree J."/>
            <person name="Creasy T."/>
            <person name="Davidsen T.M."/>
            <person name="Haft D.H."/>
            <person name="Zafar N."/>
            <person name="Zhou L."/>
            <person name="Halpin R."/>
            <person name="Holley T."/>
            <person name="Khouri H.M."/>
            <person name="Feldblyum T.V."/>
            <person name="White O."/>
            <person name="Fraser C.M."/>
            <person name="Chatterjee A.K."/>
            <person name="Cartinhour S."/>
            <person name="Schneider D."/>
            <person name="Mansfield J.W."/>
            <person name="Collmer A."/>
            <person name="Buell R."/>
        </authorList>
    </citation>
    <scope>NUCLEOTIDE SEQUENCE [LARGE SCALE GENOMIC DNA]</scope>
    <source>
        <strain>1448A / Race 6</strain>
    </source>
</reference>
<name>RL32_PSE14</name>
<comment type="similarity">
    <text evidence="1">Belongs to the bacterial ribosomal protein bL32 family.</text>
</comment>
<protein>
    <recommendedName>
        <fullName evidence="1">Large ribosomal subunit protein bL32</fullName>
    </recommendedName>
    <alternativeName>
        <fullName evidence="3">50S ribosomal protein L32</fullName>
    </alternativeName>
</protein>
<proteinExistence type="inferred from homology"/>
<organism>
    <name type="scientific">Pseudomonas savastanoi pv. phaseolicola (strain 1448A / Race 6)</name>
    <name type="common">Pseudomonas syringae pv. phaseolicola (strain 1448A / Race 6)</name>
    <dbReference type="NCBI Taxonomy" id="264730"/>
    <lineage>
        <taxon>Bacteria</taxon>
        <taxon>Pseudomonadati</taxon>
        <taxon>Pseudomonadota</taxon>
        <taxon>Gammaproteobacteria</taxon>
        <taxon>Pseudomonadales</taxon>
        <taxon>Pseudomonadaceae</taxon>
        <taxon>Pseudomonas</taxon>
    </lineage>
</organism>
<keyword id="KW-0687">Ribonucleoprotein</keyword>
<keyword id="KW-0689">Ribosomal protein</keyword>
<accession>Q48L44</accession>
<gene>
    <name evidence="1" type="primary">rpmF</name>
    <name type="ordered locus">PSPPH_1638</name>
</gene>
<evidence type="ECO:0000255" key="1">
    <source>
        <dbReference type="HAMAP-Rule" id="MF_00340"/>
    </source>
</evidence>
<evidence type="ECO:0000256" key="2">
    <source>
        <dbReference type="SAM" id="MobiDB-lite"/>
    </source>
</evidence>
<evidence type="ECO:0000305" key="3"/>
<dbReference type="EMBL" id="CP000058">
    <property type="protein sequence ID" value="AAZ34652.1"/>
    <property type="molecule type" value="Genomic_DNA"/>
</dbReference>
<dbReference type="RefSeq" id="WP_002552688.1">
    <property type="nucleotide sequence ID" value="NC_005773.3"/>
</dbReference>
<dbReference type="SMR" id="Q48L44"/>
<dbReference type="GeneID" id="96217995"/>
<dbReference type="KEGG" id="psp:PSPPH_1638"/>
<dbReference type="eggNOG" id="COG0333">
    <property type="taxonomic scope" value="Bacteria"/>
</dbReference>
<dbReference type="HOGENOM" id="CLU_129084_2_1_6"/>
<dbReference type="Proteomes" id="UP000000551">
    <property type="component" value="Chromosome"/>
</dbReference>
<dbReference type="GO" id="GO:0015934">
    <property type="term" value="C:large ribosomal subunit"/>
    <property type="evidence" value="ECO:0007669"/>
    <property type="project" value="InterPro"/>
</dbReference>
<dbReference type="GO" id="GO:0003735">
    <property type="term" value="F:structural constituent of ribosome"/>
    <property type="evidence" value="ECO:0007669"/>
    <property type="project" value="InterPro"/>
</dbReference>
<dbReference type="GO" id="GO:0006412">
    <property type="term" value="P:translation"/>
    <property type="evidence" value="ECO:0007669"/>
    <property type="project" value="UniProtKB-UniRule"/>
</dbReference>
<dbReference type="HAMAP" id="MF_00340">
    <property type="entry name" value="Ribosomal_bL32"/>
    <property type="match status" value="1"/>
</dbReference>
<dbReference type="InterPro" id="IPR002677">
    <property type="entry name" value="Ribosomal_bL32"/>
</dbReference>
<dbReference type="InterPro" id="IPR044957">
    <property type="entry name" value="Ribosomal_bL32_bact"/>
</dbReference>
<dbReference type="InterPro" id="IPR011332">
    <property type="entry name" value="Ribosomal_zn-bd"/>
</dbReference>
<dbReference type="NCBIfam" id="TIGR01031">
    <property type="entry name" value="rpmF_bact"/>
    <property type="match status" value="1"/>
</dbReference>
<dbReference type="PANTHER" id="PTHR35534">
    <property type="entry name" value="50S RIBOSOMAL PROTEIN L32"/>
    <property type="match status" value="1"/>
</dbReference>
<dbReference type="PANTHER" id="PTHR35534:SF1">
    <property type="entry name" value="LARGE RIBOSOMAL SUBUNIT PROTEIN BL32"/>
    <property type="match status" value="1"/>
</dbReference>
<dbReference type="Pfam" id="PF01783">
    <property type="entry name" value="Ribosomal_L32p"/>
    <property type="match status" value="1"/>
</dbReference>
<dbReference type="SUPFAM" id="SSF57829">
    <property type="entry name" value="Zn-binding ribosomal proteins"/>
    <property type="match status" value="1"/>
</dbReference>